<geneLocation type="plasmid">
    <name>pSymB</name>
    <name>megaplasmid 2</name>
</geneLocation>
<dbReference type="EC" id="4.3.1.3"/>
<dbReference type="EMBL" id="AF032903">
    <property type="protein sequence ID" value="AAB86963.1"/>
    <property type="molecule type" value="Genomic_DNA"/>
</dbReference>
<dbReference type="EMBL" id="AL591985">
    <property type="protein sequence ID" value="CAC49231.1"/>
    <property type="molecule type" value="Genomic_DNA"/>
</dbReference>
<dbReference type="PIR" id="G95945">
    <property type="entry name" value="G95945"/>
</dbReference>
<dbReference type="RefSeq" id="NP_437371.1">
    <property type="nucleotide sequence ID" value="NC_003078.1"/>
</dbReference>
<dbReference type="RefSeq" id="WP_010975687.1">
    <property type="nucleotide sequence ID" value="NC_003078.1"/>
</dbReference>
<dbReference type="SMR" id="O31197"/>
<dbReference type="EnsemblBacteria" id="CAC49231">
    <property type="protein sequence ID" value="CAC49231"/>
    <property type="gene ID" value="SM_b21165"/>
</dbReference>
<dbReference type="KEGG" id="sme:SM_b21165"/>
<dbReference type="PATRIC" id="fig|266834.11.peg.5762"/>
<dbReference type="eggNOG" id="COG2986">
    <property type="taxonomic scope" value="Bacteria"/>
</dbReference>
<dbReference type="HOGENOM" id="CLU_014801_4_0_5"/>
<dbReference type="OrthoDB" id="9806955at2"/>
<dbReference type="UniPathway" id="UPA00379">
    <property type="reaction ID" value="UER00549"/>
</dbReference>
<dbReference type="Proteomes" id="UP000001976">
    <property type="component" value="Plasmid pSymB"/>
</dbReference>
<dbReference type="GO" id="GO:0005737">
    <property type="term" value="C:cytoplasm"/>
    <property type="evidence" value="ECO:0007669"/>
    <property type="project" value="UniProtKB-SubCell"/>
</dbReference>
<dbReference type="GO" id="GO:0004397">
    <property type="term" value="F:histidine ammonia-lyase activity"/>
    <property type="evidence" value="ECO:0007669"/>
    <property type="project" value="UniProtKB-UniRule"/>
</dbReference>
<dbReference type="GO" id="GO:0019556">
    <property type="term" value="P:L-histidine catabolic process to glutamate and formamide"/>
    <property type="evidence" value="ECO:0007669"/>
    <property type="project" value="UniProtKB-UniPathway"/>
</dbReference>
<dbReference type="GO" id="GO:0019557">
    <property type="term" value="P:L-histidine catabolic process to glutamate and formate"/>
    <property type="evidence" value="ECO:0007669"/>
    <property type="project" value="UniProtKB-UniPathway"/>
</dbReference>
<dbReference type="CDD" id="cd00332">
    <property type="entry name" value="PAL-HAL"/>
    <property type="match status" value="1"/>
</dbReference>
<dbReference type="FunFam" id="1.10.275.10:FF:000005">
    <property type="entry name" value="Histidine ammonia-lyase"/>
    <property type="match status" value="1"/>
</dbReference>
<dbReference type="FunFam" id="1.20.200.10:FF:000003">
    <property type="entry name" value="Histidine ammonia-lyase"/>
    <property type="match status" value="1"/>
</dbReference>
<dbReference type="Gene3D" id="1.20.200.10">
    <property type="entry name" value="Fumarase/aspartase (Central domain)"/>
    <property type="match status" value="1"/>
</dbReference>
<dbReference type="Gene3D" id="1.10.275.10">
    <property type="entry name" value="Fumarase/aspartase (N-terminal domain)"/>
    <property type="match status" value="1"/>
</dbReference>
<dbReference type="HAMAP" id="MF_00229">
    <property type="entry name" value="His_ammonia_lyase"/>
    <property type="match status" value="1"/>
</dbReference>
<dbReference type="InterPro" id="IPR001106">
    <property type="entry name" value="Aromatic_Lyase"/>
</dbReference>
<dbReference type="InterPro" id="IPR024083">
    <property type="entry name" value="Fumarase/histidase_N"/>
</dbReference>
<dbReference type="InterPro" id="IPR005921">
    <property type="entry name" value="HutH"/>
</dbReference>
<dbReference type="InterPro" id="IPR008948">
    <property type="entry name" value="L-Aspartase-like"/>
</dbReference>
<dbReference type="InterPro" id="IPR022313">
    <property type="entry name" value="Phe/His_NH3-lyase_AS"/>
</dbReference>
<dbReference type="NCBIfam" id="TIGR01225">
    <property type="entry name" value="hutH"/>
    <property type="match status" value="1"/>
</dbReference>
<dbReference type="NCBIfam" id="NF006871">
    <property type="entry name" value="PRK09367.1"/>
    <property type="match status" value="1"/>
</dbReference>
<dbReference type="PANTHER" id="PTHR10362">
    <property type="entry name" value="HISTIDINE AMMONIA-LYASE"/>
    <property type="match status" value="1"/>
</dbReference>
<dbReference type="Pfam" id="PF00221">
    <property type="entry name" value="Lyase_aromatic"/>
    <property type="match status" value="1"/>
</dbReference>
<dbReference type="SUPFAM" id="SSF48557">
    <property type="entry name" value="L-aspartase-like"/>
    <property type="match status" value="1"/>
</dbReference>
<dbReference type="PROSITE" id="PS00488">
    <property type="entry name" value="PAL_HISTIDASE"/>
    <property type="match status" value="1"/>
</dbReference>
<accession>O31197</accession>
<keyword id="KW-0963">Cytoplasm</keyword>
<keyword id="KW-0369">Histidine metabolism</keyword>
<keyword id="KW-0456">Lyase</keyword>
<keyword id="KW-0614">Plasmid</keyword>
<keyword id="KW-1185">Reference proteome</keyword>
<gene>
    <name type="primary">hutH</name>
    <name type="ordered locus">RB0831</name>
    <name type="ORF">SMb21165</name>
</gene>
<proteinExistence type="evidence at transcript level"/>
<evidence type="ECO:0000250" key="1"/>
<evidence type="ECO:0000305" key="2"/>
<sequence>MTVILRPGSVPLSDLETIYWTGAPARLDAAFDAGIAKAAARIAEIVAGNAPVYGINTGFGKLASIKIDSSDVATLQRNLILSHCCGVGQPLTEDIVRLIMALKLISLGRGASGVRLELVRLIEAMLDKGVIPLIPEKGSVGASGDLAPLAHMAAVMMGHGEAFFAGERMKGDAALKAAGLSPVTLAAKEGLALINGTQVSTALALAGLFRAHRAGQAALITGALSTDAAMGSSAPFHPDIHTLRGHKGQIDTAAALRQLLTGSPIRQSHIEGDERVQDPYCIRCQPQVDGACLDLLRSVAATLTIEANAVTDNPLVLSDNSVVSGGNFHAEPVAFAADQIALAVCEIGAISQRRIALLVDPALSYGLPAFLAKKPGLNSGLMIAEVTSAALMSENKQLSHPASVDSTPTSANQEDHVSMACHGARRLLQMTENLFSIIGIEALAAVQGIEFRAPLTTSPELQKAAAAVRGVSSSIEEDRYMADDLKAAGDLVASGRLAAAVSAGILPKLEN</sequence>
<comment type="catalytic activity">
    <reaction>
        <text>L-histidine = trans-urocanate + NH4(+)</text>
        <dbReference type="Rhea" id="RHEA:21232"/>
        <dbReference type="ChEBI" id="CHEBI:17771"/>
        <dbReference type="ChEBI" id="CHEBI:28938"/>
        <dbReference type="ChEBI" id="CHEBI:57595"/>
        <dbReference type="EC" id="4.3.1.3"/>
    </reaction>
</comment>
<comment type="pathway">
    <text>Amino-acid degradation; L-histidine degradation into L-glutamate; N-formimidoyl-L-glutamate from L-histidine: step 1/3.</text>
</comment>
<comment type="subcellular location">
    <subcellularLocation>
        <location evidence="2">Cytoplasm</location>
    </subcellularLocation>
</comment>
<comment type="induction">
    <text>By histidine.</text>
</comment>
<comment type="PTM">
    <text evidence="1">Contains an active site 4-methylidene-imidazol-5-one (MIO), which is formed autocatalytically by cyclization and dehydration of residues Ala-Ser-Gly.</text>
</comment>
<comment type="similarity">
    <text evidence="2">Belongs to the PAL/histidase family.</text>
</comment>
<reference key="1">
    <citation type="submission" date="1997-11" db="EMBL/GenBank/DDBJ databases">
        <title>A Sinorhizobium meliloti hutH-mutant, defective in the histidine degrading enzyme histidase, is impaired in stationary phase survival.</title>
        <authorList>
            <person name="Uhde C."/>
            <person name="Schmidt R."/>
            <person name="Droege M."/>
            <person name="Jording D."/>
            <person name="Puehler A."/>
            <person name="Selbitschka W."/>
        </authorList>
    </citation>
    <scope>NUCLEOTIDE SEQUENCE [GENOMIC DNA]</scope>
    <source>
        <strain>RCR2011 / SU47</strain>
    </source>
</reference>
<reference key="2">
    <citation type="journal article" date="2001" name="Proc. Natl. Acad. Sci. U.S.A.">
        <title>The complete sequence of the 1,683-kb pSymB megaplasmid from the N2-fixing endosymbiont Sinorhizobium meliloti.</title>
        <authorList>
            <person name="Finan T.M."/>
            <person name="Weidner S."/>
            <person name="Wong K."/>
            <person name="Buhrmester J."/>
            <person name="Chain P."/>
            <person name="Vorhoelter F.J."/>
            <person name="Hernandez-Lucas I."/>
            <person name="Becker A."/>
            <person name="Cowie A."/>
            <person name="Gouzy J."/>
            <person name="Golding B."/>
            <person name="Puehler A."/>
        </authorList>
    </citation>
    <scope>NUCLEOTIDE SEQUENCE [LARGE SCALE GENOMIC DNA]</scope>
    <source>
        <strain>1021</strain>
    </source>
</reference>
<reference key="3">
    <citation type="journal article" date="2001" name="Science">
        <title>The composite genome of the legume symbiont Sinorhizobium meliloti.</title>
        <authorList>
            <person name="Galibert F."/>
            <person name="Finan T.M."/>
            <person name="Long S.R."/>
            <person name="Puehler A."/>
            <person name="Abola P."/>
            <person name="Ampe F."/>
            <person name="Barloy-Hubler F."/>
            <person name="Barnett M.J."/>
            <person name="Becker A."/>
            <person name="Boistard P."/>
            <person name="Bothe G."/>
            <person name="Boutry M."/>
            <person name="Bowser L."/>
            <person name="Buhrmester J."/>
            <person name="Cadieu E."/>
            <person name="Capela D."/>
            <person name="Chain P."/>
            <person name="Cowie A."/>
            <person name="Davis R.W."/>
            <person name="Dreano S."/>
            <person name="Federspiel N.A."/>
            <person name="Fisher R.F."/>
            <person name="Gloux S."/>
            <person name="Godrie T."/>
            <person name="Goffeau A."/>
            <person name="Golding B."/>
            <person name="Gouzy J."/>
            <person name="Gurjal M."/>
            <person name="Hernandez-Lucas I."/>
            <person name="Hong A."/>
            <person name="Huizar L."/>
            <person name="Hyman R.W."/>
            <person name="Jones T."/>
            <person name="Kahn D."/>
            <person name="Kahn M.L."/>
            <person name="Kalman S."/>
            <person name="Keating D.H."/>
            <person name="Kiss E."/>
            <person name="Komp C."/>
            <person name="Lelaure V."/>
            <person name="Masuy D."/>
            <person name="Palm C."/>
            <person name="Peck M.C."/>
            <person name="Pohl T.M."/>
            <person name="Portetelle D."/>
            <person name="Purnelle B."/>
            <person name="Ramsperger U."/>
            <person name="Surzycki R."/>
            <person name="Thebault P."/>
            <person name="Vandenbol M."/>
            <person name="Vorhoelter F.J."/>
            <person name="Weidner S."/>
            <person name="Wells D.H."/>
            <person name="Wong K."/>
            <person name="Yeh K.-C."/>
            <person name="Batut J."/>
        </authorList>
    </citation>
    <scope>NUCLEOTIDE SEQUENCE [LARGE SCALE GENOMIC DNA]</scope>
    <source>
        <strain>1021</strain>
    </source>
</reference>
<protein>
    <recommendedName>
        <fullName>Histidine ammonia-lyase</fullName>
        <shortName>Histidase</shortName>
        <ecNumber>4.3.1.3</ecNumber>
    </recommendedName>
</protein>
<name>HUTH_RHIME</name>
<feature type="chain" id="PRO_0000161022" description="Histidine ammonia-lyase">
    <location>
        <begin position="1"/>
        <end position="511"/>
    </location>
</feature>
<feature type="modified residue" description="2,3-didehydroalanine (Ser)" evidence="1">
    <location>
        <position position="143"/>
    </location>
</feature>
<feature type="cross-link" description="5-imidazolinone (Ala-Gly)" evidence="1">
    <location>
        <begin position="142"/>
        <end position="144"/>
    </location>
</feature>
<feature type="sequence conflict" description="In Ref. 1; AAB86963." evidence="2" ref="1">
    <original>HTLRGHKGQIDT</original>
    <variation>QHCAAIRARSTR</variation>
    <location>
        <begin position="241"/>
        <end position="252"/>
    </location>
</feature>
<feature type="sequence conflict" description="In Ref. 1; AAB86963." evidence="2" ref="1">
    <original>YG</original>
    <variation>LR</variation>
    <location>
        <begin position="365"/>
        <end position="366"/>
    </location>
</feature>
<organism>
    <name type="scientific">Rhizobium meliloti (strain 1021)</name>
    <name type="common">Ensifer meliloti</name>
    <name type="synonym">Sinorhizobium meliloti</name>
    <dbReference type="NCBI Taxonomy" id="266834"/>
    <lineage>
        <taxon>Bacteria</taxon>
        <taxon>Pseudomonadati</taxon>
        <taxon>Pseudomonadota</taxon>
        <taxon>Alphaproteobacteria</taxon>
        <taxon>Hyphomicrobiales</taxon>
        <taxon>Rhizobiaceae</taxon>
        <taxon>Sinorhizobium/Ensifer group</taxon>
        <taxon>Sinorhizobium</taxon>
    </lineage>
</organism>